<keyword id="KW-1185">Reference proteome</keyword>
<keyword id="KW-0687">Ribonucleoprotein</keyword>
<keyword id="KW-0689">Ribosomal protein</keyword>
<accession>Q3A9R5</accession>
<sequence>MNKQKIRIKLKAFEHTILDQSAAKIVETAKRTGASVSGPIPLPTERSLYTVLRSPHIDKDSREQFELKVHKRLIDIIDPTPKTIDALMRIDLPAGVDIEIKL</sequence>
<gene>
    <name evidence="1" type="primary">rpsJ</name>
    <name type="ordered locus">CHY_2310</name>
</gene>
<name>RS10_CARHZ</name>
<reference key="1">
    <citation type="journal article" date="2005" name="PLoS Genet.">
        <title>Life in hot carbon monoxide: the complete genome sequence of Carboxydothermus hydrogenoformans Z-2901.</title>
        <authorList>
            <person name="Wu M."/>
            <person name="Ren Q."/>
            <person name="Durkin A.S."/>
            <person name="Daugherty S.C."/>
            <person name="Brinkac L.M."/>
            <person name="Dodson R.J."/>
            <person name="Madupu R."/>
            <person name="Sullivan S.A."/>
            <person name="Kolonay J.F."/>
            <person name="Nelson W.C."/>
            <person name="Tallon L.J."/>
            <person name="Jones K.M."/>
            <person name="Ulrich L.E."/>
            <person name="Gonzalez J.M."/>
            <person name="Zhulin I.B."/>
            <person name="Robb F.T."/>
            <person name="Eisen J.A."/>
        </authorList>
    </citation>
    <scope>NUCLEOTIDE SEQUENCE [LARGE SCALE GENOMIC DNA]</scope>
    <source>
        <strain>ATCC BAA-161 / DSM 6008 / Z-2901</strain>
    </source>
</reference>
<dbReference type="EMBL" id="CP000141">
    <property type="protein sequence ID" value="ABB15747.1"/>
    <property type="molecule type" value="Genomic_DNA"/>
</dbReference>
<dbReference type="RefSeq" id="WP_011345192.1">
    <property type="nucleotide sequence ID" value="NC_007503.1"/>
</dbReference>
<dbReference type="SMR" id="Q3A9R5"/>
<dbReference type="FunCoup" id="Q3A9R5">
    <property type="interactions" value="465"/>
</dbReference>
<dbReference type="STRING" id="246194.CHY_2310"/>
<dbReference type="KEGG" id="chy:CHY_2310"/>
<dbReference type="eggNOG" id="COG0051">
    <property type="taxonomic scope" value="Bacteria"/>
</dbReference>
<dbReference type="HOGENOM" id="CLU_122625_1_3_9"/>
<dbReference type="InParanoid" id="Q3A9R5"/>
<dbReference type="OrthoDB" id="9804464at2"/>
<dbReference type="Proteomes" id="UP000002706">
    <property type="component" value="Chromosome"/>
</dbReference>
<dbReference type="GO" id="GO:1990904">
    <property type="term" value="C:ribonucleoprotein complex"/>
    <property type="evidence" value="ECO:0007669"/>
    <property type="project" value="UniProtKB-KW"/>
</dbReference>
<dbReference type="GO" id="GO:0005840">
    <property type="term" value="C:ribosome"/>
    <property type="evidence" value="ECO:0007669"/>
    <property type="project" value="UniProtKB-KW"/>
</dbReference>
<dbReference type="GO" id="GO:0003735">
    <property type="term" value="F:structural constituent of ribosome"/>
    <property type="evidence" value="ECO:0007669"/>
    <property type="project" value="InterPro"/>
</dbReference>
<dbReference type="GO" id="GO:0000049">
    <property type="term" value="F:tRNA binding"/>
    <property type="evidence" value="ECO:0007669"/>
    <property type="project" value="UniProtKB-UniRule"/>
</dbReference>
<dbReference type="GO" id="GO:0006412">
    <property type="term" value="P:translation"/>
    <property type="evidence" value="ECO:0007669"/>
    <property type="project" value="UniProtKB-UniRule"/>
</dbReference>
<dbReference type="FunFam" id="3.30.70.600:FF:000001">
    <property type="entry name" value="30S ribosomal protein S10"/>
    <property type="match status" value="1"/>
</dbReference>
<dbReference type="Gene3D" id="3.30.70.600">
    <property type="entry name" value="Ribosomal protein S10 domain"/>
    <property type="match status" value="1"/>
</dbReference>
<dbReference type="HAMAP" id="MF_00508">
    <property type="entry name" value="Ribosomal_uS10"/>
    <property type="match status" value="1"/>
</dbReference>
<dbReference type="InterPro" id="IPR001848">
    <property type="entry name" value="Ribosomal_uS10"/>
</dbReference>
<dbReference type="InterPro" id="IPR018268">
    <property type="entry name" value="Ribosomal_uS10_CS"/>
</dbReference>
<dbReference type="InterPro" id="IPR027486">
    <property type="entry name" value="Ribosomal_uS10_dom"/>
</dbReference>
<dbReference type="InterPro" id="IPR036838">
    <property type="entry name" value="Ribosomal_uS10_dom_sf"/>
</dbReference>
<dbReference type="NCBIfam" id="NF001861">
    <property type="entry name" value="PRK00596.1"/>
    <property type="match status" value="1"/>
</dbReference>
<dbReference type="NCBIfam" id="TIGR01049">
    <property type="entry name" value="rpsJ_bact"/>
    <property type="match status" value="1"/>
</dbReference>
<dbReference type="PANTHER" id="PTHR11700">
    <property type="entry name" value="30S RIBOSOMAL PROTEIN S10 FAMILY MEMBER"/>
    <property type="match status" value="1"/>
</dbReference>
<dbReference type="Pfam" id="PF00338">
    <property type="entry name" value="Ribosomal_S10"/>
    <property type="match status" value="1"/>
</dbReference>
<dbReference type="PRINTS" id="PR00971">
    <property type="entry name" value="RIBOSOMALS10"/>
</dbReference>
<dbReference type="SMART" id="SM01403">
    <property type="entry name" value="Ribosomal_S10"/>
    <property type="match status" value="1"/>
</dbReference>
<dbReference type="SUPFAM" id="SSF54999">
    <property type="entry name" value="Ribosomal protein S10"/>
    <property type="match status" value="1"/>
</dbReference>
<dbReference type="PROSITE" id="PS00361">
    <property type="entry name" value="RIBOSOMAL_S10"/>
    <property type="match status" value="1"/>
</dbReference>
<protein>
    <recommendedName>
        <fullName evidence="1">Small ribosomal subunit protein uS10</fullName>
    </recommendedName>
    <alternativeName>
        <fullName evidence="2">30S ribosomal protein S10</fullName>
    </alternativeName>
</protein>
<comment type="function">
    <text evidence="1">Involved in the binding of tRNA to the ribosomes.</text>
</comment>
<comment type="subunit">
    <text evidence="1">Part of the 30S ribosomal subunit.</text>
</comment>
<comment type="similarity">
    <text evidence="1">Belongs to the universal ribosomal protein uS10 family.</text>
</comment>
<proteinExistence type="inferred from homology"/>
<feature type="chain" id="PRO_0000237029" description="Small ribosomal subunit protein uS10">
    <location>
        <begin position="1"/>
        <end position="102"/>
    </location>
</feature>
<evidence type="ECO:0000255" key="1">
    <source>
        <dbReference type="HAMAP-Rule" id="MF_00508"/>
    </source>
</evidence>
<evidence type="ECO:0000305" key="2"/>
<organism>
    <name type="scientific">Carboxydothermus hydrogenoformans (strain ATCC BAA-161 / DSM 6008 / Z-2901)</name>
    <dbReference type="NCBI Taxonomy" id="246194"/>
    <lineage>
        <taxon>Bacteria</taxon>
        <taxon>Bacillati</taxon>
        <taxon>Bacillota</taxon>
        <taxon>Clostridia</taxon>
        <taxon>Thermoanaerobacterales</taxon>
        <taxon>Thermoanaerobacteraceae</taxon>
        <taxon>Carboxydothermus</taxon>
    </lineage>
</organism>